<proteinExistence type="inferred from homology"/>
<sequence>MGLLSAVFGTYSEREVKRIRPIVSKINELDEVMQKLSDDELKAKTVEFKERLNNGETVDDILPEAFAVVREASKRVLNMKHYDEQLIGGIVLHQGRIAEMKTGEGKTLVATLPAYLNGLTGKGVHIITVNDYLAKRDAEQMGELYGFLGLTTGVIVHELTNEQRREAYNSDITYGTNNEFGFDYLRDNMVIYKEERVQRKLNFTIVDEVDSILIDEARTPLIISGQGEKSTEFYKVADYFVKTLVKEKDYTIDEKANAVMLTDEGFHKAEQTFKVENYADAENVELQHYVTQALKANYAMRRDKDYMVKDGEVIIVDEFTGRLMEGRRYSDGLHQAIEAKENVKIARESKTLATITFQNYFRMYEKLSGMTGTALTEENEFREIYGLDVIVVPTHKPVVRIDNPDLVFKSEKGKIMAVVDEIAKAHEVGQPVLVGTVSIEKSELISSMLKKKGVPHQVLNAKFHEQEAEIITHAGEKGMVTIATNMAGRGTDIKLGEGVLEIGGLKIIGTERHESRRIDNQLRGRSGRQGDSGESTFFISLEDDLMRIFGSEKIQGVVEKLGLEEDEAIESKLVSKSIENAQKKVEGNNFDIRKTLLGYDDVMNKQREVIYKQRAEVLEGEDVKEEILHMLRDVISDAVDTHIKEDAEDYRESFLYLISYLNDICIPTNEVNLPALTEMSKEEIIDHLYDVAVKSYEDKEAEFTSERLREIERVVLLRSVDTKWMDHINNMDNLKQGIGLRAFKQVDPVQAYQMEGSAMFEEMIDSIKKETVKMLLHVKVERAPERVRVAQETNAVHGDKPSAPVGPVRNLNKFGRNDVCPCGSGKKFKNCCGREA</sequence>
<dbReference type="EC" id="7.4.2.8" evidence="1"/>
<dbReference type="EMBL" id="CP001056">
    <property type="protein sequence ID" value="ACD24795.1"/>
    <property type="molecule type" value="Genomic_DNA"/>
</dbReference>
<dbReference type="SMR" id="B2TK15"/>
<dbReference type="KEGG" id="cbk:CLL_A0520"/>
<dbReference type="PATRIC" id="fig|935198.13.peg.468"/>
<dbReference type="HOGENOM" id="CLU_005314_3_0_9"/>
<dbReference type="Proteomes" id="UP000001195">
    <property type="component" value="Chromosome"/>
</dbReference>
<dbReference type="GO" id="GO:0031522">
    <property type="term" value="C:cell envelope Sec protein transport complex"/>
    <property type="evidence" value="ECO:0007669"/>
    <property type="project" value="TreeGrafter"/>
</dbReference>
<dbReference type="GO" id="GO:0005829">
    <property type="term" value="C:cytosol"/>
    <property type="evidence" value="ECO:0007669"/>
    <property type="project" value="TreeGrafter"/>
</dbReference>
<dbReference type="GO" id="GO:0005886">
    <property type="term" value="C:plasma membrane"/>
    <property type="evidence" value="ECO:0007669"/>
    <property type="project" value="UniProtKB-SubCell"/>
</dbReference>
<dbReference type="GO" id="GO:0005524">
    <property type="term" value="F:ATP binding"/>
    <property type="evidence" value="ECO:0007669"/>
    <property type="project" value="UniProtKB-UniRule"/>
</dbReference>
<dbReference type="GO" id="GO:0046872">
    <property type="term" value="F:metal ion binding"/>
    <property type="evidence" value="ECO:0007669"/>
    <property type="project" value="UniProtKB-KW"/>
</dbReference>
<dbReference type="GO" id="GO:0008564">
    <property type="term" value="F:protein-exporting ATPase activity"/>
    <property type="evidence" value="ECO:0007669"/>
    <property type="project" value="UniProtKB-EC"/>
</dbReference>
<dbReference type="GO" id="GO:0065002">
    <property type="term" value="P:intracellular protein transmembrane transport"/>
    <property type="evidence" value="ECO:0007669"/>
    <property type="project" value="UniProtKB-UniRule"/>
</dbReference>
<dbReference type="GO" id="GO:0017038">
    <property type="term" value="P:protein import"/>
    <property type="evidence" value="ECO:0007669"/>
    <property type="project" value="InterPro"/>
</dbReference>
<dbReference type="GO" id="GO:0006605">
    <property type="term" value="P:protein targeting"/>
    <property type="evidence" value="ECO:0007669"/>
    <property type="project" value="UniProtKB-UniRule"/>
</dbReference>
<dbReference type="GO" id="GO:0043952">
    <property type="term" value="P:protein transport by the Sec complex"/>
    <property type="evidence" value="ECO:0007669"/>
    <property type="project" value="TreeGrafter"/>
</dbReference>
<dbReference type="CDD" id="cd17928">
    <property type="entry name" value="DEXDc_SecA"/>
    <property type="match status" value="1"/>
</dbReference>
<dbReference type="CDD" id="cd18803">
    <property type="entry name" value="SF2_C_secA"/>
    <property type="match status" value="1"/>
</dbReference>
<dbReference type="FunFam" id="1.10.3060.10:FF:000002">
    <property type="entry name" value="Preprotein translocase subunit SecA"/>
    <property type="match status" value="1"/>
</dbReference>
<dbReference type="FunFam" id="3.40.50.300:FF:000429">
    <property type="entry name" value="Preprotein translocase subunit SecA"/>
    <property type="match status" value="1"/>
</dbReference>
<dbReference type="FunFam" id="3.90.1440.10:FF:000001">
    <property type="entry name" value="Preprotein translocase subunit SecA"/>
    <property type="match status" value="1"/>
</dbReference>
<dbReference type="FunFam" id="3.40.50.300:FF:000334">
    <property type="entry name" value="Protein translocase subunit SecA"/>
    <property type="match status" value="1"/>
</dbReference>
<dbReference type="Gene3D" id="1.10.3060.10">
    <property type="entry name" value="Helical scaffold and wing domains of SecA"/>
    <property type="match status" value="1"/>
</dbReference>
<dbReference type="Gene3D" id="3.40.50.300">
    <property type="entry name" value="P-loop containing nucleotide triphosphate hydrolases"/>
    <property type="match status" value="3"/>
</dbReference>
<dbReference type="Gene3D" id="3.90.1440.10">
    <property type="entry name" value="SecA, preprotein cross-linking domain"/>
    <property type="match status" value="1"/>
</dbReference>
<dbReference type="HAMAP" id="MF_01382">
    <property type="entry name" value="SecA"/>
    <property type="match status" value="1"/>
</dbReference>
<dbReference type="InterPro" id="IPR014001">
    <property type="entry name" value="Helicase_ATP-bd"/>
</dbReference>
<dbReference type="InterPro" id="IPR001650">
    <property type="entry name" value="Helicase_C-like"/>
</dbReference>
<dbReference type="InterPro" id="IPR027417">
    <property type="entry name" value="P-loop_NTPase"/>
</dbReference>
<dbReference type="InterPro" id="IPR004027">
    <property type="entry name" value="SEC_C_motif"/>
</dbReference>
<dbReference type="InterPro" id="IPR000185">
    <property type="entry name" value="SecA"/>
</dbReference>
<dbReference type="InterPro" id="IPR020937">
    <property type="entry name" value="SecA_CS"/>
</dbReference>
<dbReference type="InterPro" id="IPR011115">
    <property type="entry name" value="SecA_DEAD"/>
</dbReference>
<dbReference type="InterPro" id="IPR014018">
    <property type="entry name" value="SecA_motor_DEAD"/>
</dbReference>
<dbReference type="InterPro" id="IPR011130">
    <property type="entry name" value="SecA_preprotein_X-link_dom"/>
</dbReference>
<dbReference type="InterPro" id="IPR044722">
    <property type="entry name" value="SecA_SF2_C"/>
</dbReference>
<dbReference type="InterPro" id="IPR011116">
    <property type="entry name" value="SecA_Wing/Scaffold"/>
</dbReference>
<dbReference type="InterPro" id="IPR036266">
    <property type="entry name" value="SecA_Wing/Scaffold_sf"/>
</dbReference>
<dbReference type="InterPro" id="IPR036670">
    <property type="entry name" value="SecA_X-link_sf"/>
</dbReference>
<dbReference type="NCBIfam" id="NF006630">
    <property type="entry name" value="PRK09200.1"/>
    <property type="match status" value="1"/>
</dbReference>
<dbReference type="NCBIfam" id="NF009538">
    <property type="entry name" value="PRK12904.1"/>
    <property type="match status" value="1"/>
</dbReference>
<dbReference type="NCBIfam" id="TIGR00963">
    <property type="entry name" value="secA"/>
    <property type="match status" value="1"/>
</dbReference>
<dbReference type="PANTHER" id="PTHR30612:SF0">
    <property type="entry name" value="CHLOROPLAST PROTEIN-TRANSPORTING ATPASE"/>
    <property type="match status" value="1"/>
</dbReference>
<dbReference type="PANTHER" id="PTHR30612">
    <property type="entry name" value="SECA INNER MEMBRANE COMPONENT OF SEC PROTEIN SECRETION SYSTEM"/>
    <property type="match status" value="1"/>
</dbReference>
<dbReference type="Pfam" id="PF21090">
    <property type="entry name" value="P-loop_SecA"/>
    <property type="match status" value="2"/>
</dbReference>
<dbReference type="Pfam" id="PF02810">
    <property type="entry name" value="SEC-C"/>
    <property type="match status" value="1"/>
</dbReference>
<dbReference type="Pfam" id="PF07517">
    <property type="entry name" value="SecA_DEAD"/>
    <property type="match status" value="1"/>
</dbReference>
<dbReference type="Pfam" id="PF01043">
    <property type="entry name" value="SecA_PP_bind"/>
    <property type="match status" value="1"/>
</dbReference>
<dbReference type="Pfam" id="PF07516">
    <property type="entry name" value="SecA_SW"/>
    <property type="match status" value="1"/>
</dbReference>
<dbReference type="PRINTS" id="PR00906">
    <property type="entry name" value="SECA"/>
</dbReference>
<dbReference type="SMART" id="SM00957">
    <property type="entry name" value="SecA_DEAD"/>
    <property type="match status" value="1"/>
</dbReference>
<dbReference type="SMART" id="SM00958">
    <property type="entry name" value="SecA_PP_bind"/>
    <property type="match status" value="1"/>
</dbReference>
<dbReference type="SUPFAM" id="SSF81886">
    <property type="entry name" value="Helical scaffold and wing domains of SecA"/>
    <property type="match status" value="1"/>
</dbReference>
<dbReference type="SUPFAM" id="SSF52540">
    <property type="entry name" value="P-loop containing nucleoside triphosphate hydrolases"/>
    <property type="match status" value="2"/>
</dbReference>
<dbReference type="SUPFAM" id="SSF81767">
    <property type="entry name" value="Pre-protein crosslinking domain of SecA"/>
    <property type="match status" value="1"/>
</dbReference>
<dbReference type="PROSITE" id="PS01312">
    <property type="entry name" value="SECA"/>
    <property type="match status" value="1"/>
</dbReference>
<dbReference type="PROSITE" id="PS51196">
    <property type="entry name" value="SECA_MOTOR_DEAD"/>
    <property type="match status" value="1"/>
</dbReference>
<protein>
    <recommendedName>
        <fullName evidence="1">Protein translocase subunit SecA</fullName>
        <ecNumber evidence="1">7.4.2.8</ecNumber>
    </recommendedName>
</protein>
<accession>B2TK15</accession>
<reference key="1">
    <citation type="submission" date="2008-04" db="EMBL/GenBank/DDBJ databases">
        <title>Complete sequence of Clostridium botulinum strain Eklund.</title>
        <authorList>
            <person name="Brinkac L.M."/>
            <person name="Brown J.L."/>
            <person name="Bruce D."/>
            <person name="Detter C."/>
            <person name="Munk C."/>
            <person name="Smith L.A."/>
            <person name="Smith T.J."/>
            <person name="Sutton G."/>
            <person name="Brettin T.S."/>
        </authorList>
    </citation>
    <scope>NUCLEOTIDE SEQUENCE [LARGE SCALE GENOMIC DNA]</scope>
    <source>
        <strain>Eklund 17B / Type B</strain>
    </source>
</reference>
<feature type="chain" id="PRO_1000144995" description="Protein translocase subunit SecA">
    <location>
        <begin position="1"/>
        <end position="836"/>
    </location>
</feature>
<feature type="binding site" evidence="1">
    <location>
        <position position="85"/>
    </location>
    <ligand>
        <name>ATP</name>
        <dbReference type="ChEBI" id="CHEBI:30616"/>
    </ligand>
</feature>
<feature type="binding site" evidence="1">
    <location>
        <begin position="103"/>
        <end position="107"/>
    </location>
    <ligand>
        <name>ATP</name>
        <dbReference type="ChEBI" id="CHEBI:30616"/>
    </ligand>
</feature>
<feature type="binding site" evidence="1">
    <location>
        <position position="492"/>
    </location>
    <ligand>
        <name>ATP</name>
        <dbReference type="ChEBI" id="CHEBI:30616"/>
    </ligand>
</feature>
<feature type="binding site" evidence="1">
    <location>
        <position position="820"/>
    </location>
    <ligand>
        <name>Zn(2+)</name>
        <dbReference type="ChEBI" id="CHEBI:29105"/>
    </ligand>
</feature>
<feature type="binding site" evidence="1">
    <location>
        <position position="822"/>
    </location>
    <ligand>
        <name>Zn(2+)</name>
        <dbReference type="ChEBI" id="CHEBI:29105"/>
    </ligand>
</feature>
<feature type="binding site" evidence="1">
    <location>
        <position position="831"/>
    </location>
    <ligand>
        <name>Zn(2+)</name>
        <dbReference type="ChEBI" id="CHEBI:29105"/>
    </ligand>
</feature>
<feature type="binding site" evidence="1">
    <location>
        <position position="832"/>
    </location>
    <ligand>
        <name>Zn(2+)</name>
        <dbReference type="ChEBI" id="CHEBI:29105"/>
    </ligand>
</feature>
<organism>
    <name type="scientific">Clostridium botulinum (strain Eklund 17B / Type B)</name>
    <dbReference type="NCBI Taxonomy" id="935198"/>
    <lineage>
        <taxon>Bacteria</taxon>
        <taxon>Bacillati</taxon>
        <taxon>Bacillota</taxon>
        <taxon>Clostridia</taxon>
        <taxon>Eubacteriales</taxon>
        <taxon>Clostridiaceae</taxon>
        <taxon>Clostridium</taxon>
    </lineage>
</organism>
<evidence type="ECO:0000255" key="1">
    <source>
        <dbReference type="HAMAP-Rule" id="MF_01382"/>
    </source>
</evidence>
<comment type="function">
    <text evidence="1">Part of the Sec protein translocase complex. Interacts with the SecYEG preprotein conducting channel. Has a central role in coupling the hydrolysis of ATP to the transfer of proteins into and across the cell membrane, serving as an ATP-driven molecular motor driving the stepwise translocation of polypeptide chains across the membrane.</text>
</comment>
<comment type="catalytic activity">
    <reaction evidence="1">
        <text>ATP + H2O + cellular proteinSide 1 = ADP + phosphate + cellular proteinSide 2.</text>
        <dbReference type="EC" id="7.4.2.8"/>
    </reaction>
</comment>
<comment type="cofactor">
    <cofactor evidence="1">
        <name>Zn(2+)</name>
        <dbReference type="ChEBI" id="CHEBI:29105"/>
    </cofactor>
    <text evidence="1">May bind 1 zinc ion per subunit.</text>
</comment>
<comment type="subunit">
    <text evidence="1">Monomer and homodimer. Part of the essential Sec protein translocation apparatus which comprises SecA, SecYEG and auxiliary proteins SecDF. Other proteins may also be involved.</text>
</comment>
<comment type="subcellular location">
    <subcellularLocation>
        <location evidence="1">Cell membrane</location>
        <topology evidence="1">Peripheral membrane protein</topology>
        <orientation evidence="1">Cytoplasmic side</orientation>
    </subcellularLocation>
    <subcellularLocation>
        <location evidence="1">Cytoplasm</location>
    </subcellularLocation>
    <text evidence="1">Distribution is 50-50.</text>
</comment>
<comment type="similarity">
    <text evidence="1">Belongs to the SecA family.</text>
</comment>
<keyword id="KW-0067">ATP-binding</keyword>
<keyword id="KW-1003">Cell membrane</keyword>
<keyword id="KW-0963">Cytoplasm</keyword>
<keyword id="KW-0472">Membrane</keyword>
<keyword id="KW-0479">Metal-binding</keyword>
<keyword id="KW-0547">Nucleotide-binding</keyword>
<keyword id="KW-0653">Protein transport</keyword>
<keyword id="KW-1278">Translocase</keyword>
<keyword id="KW-0811">Translocation</keyword>
<keyword id="KW-0813">Transport</keyword>
<keyword id="KW-0862">Zinc</keyword>
<name>SECA_CLOBB</name>
<gene>
    <name evidence="1" type="primary">secA</name>
    <name type="ordered locus">CLL_A0520</name>
</gene>